<gene>
    <name evidence="1" type="primary">miaA</name>
    <name type="ordered locus">Shewmr7_3433</name>
</gene>
<accession>Q0HR41</accession>
<dbReference type="EC" id="2.5.1.75" evidence="1"/>
<dbReference type="EMBL" id="CP000444">
    <property type="protein sequence ID" value="ABI44414.1"/>
    <property type="molecule type" value="Genomic_DNA"/>
</dbReference>
<dbReference type="SMR" id="Q0HR41"/>
<dbReference type="KEGG" id="shm:Shewmr7_3433"/>
<dbReference type="HOGENOM" id="CLU_032616_0_0_6"/>
<dbReference type="GO" id="GO:0005524">
    <property type="term" value="F:ATP binding"/>
    <property type="evidence" value="ECO:0007669"/>
    <property type="project" value="UniProtKB-UniRule"/>
</dbReference>
<dbReference type="GO" id="GO:0052381">
    <property type="term" value="F:tRNA dimethylallyltransferase activity"/>
    <property type="evidence" value="ECO:0007669"/>
    <property type="project" value="UniProtKB-UniRule"/>
</dbReference>
<dbReference type="GO" id="GO:0006400">
    <property type="term" value="P:tRNA modification"/>
    <property type="evidence" value="ECO:0007669"/>
    <property type="project" value="TreeGrafter"/>
</dbReference>
<dbReference type="FunFam" id="1.10.20.140:FF:000001">
    <property type="entry name" value="tRNA dimethylallyltransferase"/>
    <property type="match status" value="1"/>
</dbReference>
<dbReference type="Gene3D" id="1.10.20.140">
    <property type="match status" value="1"/>
</dbReference>
<dbReference type="Gene3D" id="3.40.50.300">
    <property type="entry name" value="P-loop containing nucleotide triphosphate hydrolases"/>
    <property type="match status" value="1"/>
</dbReference>
<dbReference type="HAMAP" id="MF_00185">
    <property type="entry name" value="IPP_trans"/>
    <property type="match status" value="1"/>
</dbReference>
<dbReference type="InterPro" id="IPR039657">
    <property type="entry name" value="Dimethylallyltransferase"/>
</dbReference>
<dbReference type="InterPro" id="IPR018022">
    <property type="entry name" value="IPT"/>
</dbReference>
<dbReference type="InterPro" id="IPR027417">
    <property type="entry name" value="P-loop_NTPase"/>
</dbReference>
<dbReference type="NCBIfam" id="TIGR00174">
    <property type="entry name" value="miaA"/>
    <property type="match status" value="1"/>
</dbReference>
<dbReference type="PANTHER" id="PTHR11088">
    <property type="entry name" value="TRNA DIMETHYLALLYLTRANSFERASE"/>
    <property type="match status" value="1"/>
</dbReference>
<dbReference type="PANTHER" id="PTHR11088:SF60">
    <property type="entry name" value="TRNA DIMETHYLALLYLTRANSFERASE"/>
    <property type="match status" value="1"/>
</dbReference>
<dbReference type="Pfam" id="PF01715">
    <property type="entry name" value="IPPT"/>
    <property type="match status" value="1"/>
</dbReference>
<dbReference type="SUPFAM" id="SSF52540">
    <property type="entry name" value="P-loop containing nucleoside triphosphate hydrolases"/>
    <property type="match status" value="1"/>
</dbReference>
<protein>
    <recommendedName>
        <fullName evidence="1">tRNA dimethylallyltransferase</fullName>
        <ecNumber evidence="1">2.5.1.75</ecNumber>
    </recommendedName>
    <alternativeName>
        <fullName evidence="1">Dimethylallyl diphosphate:tRNA dimethylallyltransferase</fullName>
        <shortName evidence="1">DMAPP:tRNA dimethylallyltransferase</shortName>
        <shortName evidence="1">DMATase</shortName>
    </alternativeName>
    <alternativeName>
        <fullName evidence="1">Isopentenyl-diphosphate:tRNA isopentenyltransferase</fullName>
        <shortName evidence="1">IPP transferase</shortName>
        <shortName evidence="1">IPPT</shortName>
        <shortName evidence="1">IPTase</shortName>
    </alternativeName>
</protein>
<evidence type="ECO:0000255" key="1">
    <source>
        <dbReference type="HAMAP-Rule" id="MF_00185"/>
    </source>
</evidence>
<keyword id="KW-0067">ATP-binding</keyword>
<keyword id="KW-0460">Magnesium</keyword>
<keyword id="KW-0547">Nucleotide-binding</keyword>
<keyword id="KW-0808">Transferase</keyword>
<keyword id="KW-0819">tRNA processing</keyword>
<name>MIAA_SHESR</name>
<comment type="function">
    <text evidence="1">Catalyzes the transfer of a dimethylallyl group onto the adenine at position 37 in tRNAs that read codons beginning with uridine, leading to the formation of N6-(dimethylallyl)adenosine (i(6)A).</text>
</comment>
<comment type="catalytic activity">
    <reaction evidence="1">
        <text>adenosine(37) in tRNA + dimethylallyl diphosphate = N(6)-dimethylallyladenosine(37) in tRNA + diphosphate</text>
        <dbReference type="Rhea" id="RHEA:26482"/>
        <dbReference type="Rhea" id="RHEA-COMP:10162"/>
        <dbReference type="Rhea" id="RHEA-COMP:10375"/>
        <dbReference type="ChEBI" id="CHEBI:33019"/>
        <dbReference type="ChEBI" id="CHEBI:57623"/>
        <dbReference type="ChEBI" id="CHEBI:74411"/>
        <dbReference type="ChEBI" id="CHEBI:74415"/>
        <dbReference type="EC" id="2.5.1.75"/>
    </reaction>
</comment>
<comment type="cofactor">
    <cofactor evidence="1">
        <name>Mg(2+)</name>
        <dbReference type="ChEBI" id="CHEBI:18420"/>
    </cofactor>
</comment>
<comment type="subunit">
    <text evidence="1">Monomer.</text>
</comment>
<comment type="similarity">
    <text evidence="1">Belongs to the IPP transferase family.</text>
</comment>
<proteinExistence type="inferred from homology"/>
<sequence length="296" mass="33143">MGPTASGKTALALELAEKHNCEIISVDSALIYRGMDIGSAKPSAEELARGPHRLIDIRDPAESYSAADFRADALREIEQIISMGKTPVLVGGTMMYFKALLEGLSPLPSADEAIRAEIQAEADANGWEALHAQLREIDPVSAERIHPNDPQRLSRAIEVYRISGKSLTELTQTKSAPLPYDVVQFAIAPRERKVLHELIGQRFRIMLEQGFIDEVAQLKARGDLHLDLPSMRCVGYRQCWQYLDGEFDYDTMVEKAVAATRQLAKRQLTWLRSWPELNWLESGAEGNLVTLMRQCR</sequence>
<feature type="chain" id="PRO_0000377320" description="tRNA dimethylallyltransferase">
    <location>
        <begin position="1"/>
        <end position="296"/>
    </location>
</feature>
<feature type="region of interest" description="Interaction with substrate tRNA" evidence="1">
    <location>
        <begin position="27"/>
        <end position="30"/>
    </location>
</feature>
<feature type="region of interest" description="Interaction with substrate tRNA" evidence="1">
    <location>
        <begin position="151"/>
        <end position="155"/>
    </location>
</feature>
<feature type="region of interest" description="Interaction with substrate tRNA" evidence="1">
    <location>
        <begin position="232"/>
        <end position="237"/>
    </location>
</feature>
<feature type="binding site" evidence="1">
    <location>
        <begin position="2"/>
        <end position="9"/>
    </location>
    <ligand>
        <name>ATP</name>
        <dbReference type="ChEBI" id="CHEBI:30616"/>
    </ligand>
</feature>
<feature type="binding site" evidence="1">
    <location>
        <begin position="4"/>
        <end position="9"/>
    </location>
    <ligand>
        <name>substrate</name>
    </ligand>
</feature>
<feature type="site" description="Interaction with substrate tRNA" evidence="1">
    <location>
        <position position="93"/>
    </location>
</feature>
<feature type="site" description="Interaction with substrate tRNA" evidence="1">
    <location>
        <position position="115"/>
    </location>
</feature>
<organism>
    <name type="scientific">Shewanella sp. (strain MR-7)</name>
    <dbReference type="NCBI Taxonomy" id="60481"/>
    <lineage>
        <taxon>Bacteria</taxon>
        <taxon>Pseudomonadati</taxon>
        <taxon>Pseudomonadota</taxon>
        <taxon>Gammaproteobacteria</taxon>
        <taxon>Alteromonadales</taxon>
        <taxon>Shewanellaceae</taxon>
        <taxon>Shewanella</taxon>
    </lineage>
</organism>
<reference key="1">
    <citation type="submission" date="2006-08" db="EMBL/GenBank/DDBJ databases">
        <title>Complete sequence of chromosome 1 of Shewanella sp. MR-7.</title>
        <authorList>
            <person name="Copeland A."/>
            <person name="Lucas S."/>
            <person name="Lapidus A."/>
            <person name="Barry K."/>
            <person name="Detter J.C."/>
            <person name="Glavina del Rio T."/>
            <person name="Hammon N."/>
            <person name="Israni S."/>
            <person name="Dalin E."/>
            <person name="Tice H."/>
            <person name="Pitluck S."/>
            <person name="Kiss H."/>
            <person name="Brettin T."/>
            <person name="Bruce D."/>
            <person name="Han C."/>
            <person name="Tapia R."/>
            <person name="Gilna P."/>
            <person name="Schmutz J."/>
            <person name="Larimer F."/>
            <person name="Land M."/>
            <person name="Hauser L."/>
            <person name="Kyrpides N."/>
            <person name="Mikhailova N."/>
            <person name="Nealson K."/>
            <person name="Konstantinidis K."/>
            <person name="Klappenbach J."/>
            <person name="Tiedje J."/>
            <person name="Richardson P."/>
        </authorList>
    </citation>
    <scope>NUCLEOTIDE SEQUENCE [LARGE SCALE GENOMIC DNA]</scope>
    <source>
        <strain>MR-7</strain>
    </source>
</reference>